<evidence type="ECO:0000250" key="1">
    <source>
        <dbReference type="UniProtKB" id="Q15910"/>
    </source>
</evidence>
<evidence type="ECO:0000250" key="2">
    <source>
        <dbReference type="UniProtKB" id="Q61188"/>
    </source>
</evidence>
<evidence type="ECO:0000255" key="3">
    <source>
        <dbReference type="PROSITE-ProRule" id="PRU00190"/>
    </source>
</evidence>
<evidence type="ECO:0000255" key="4">
    <source>
        <dbReference type="PROSITE-ProRule" id="PRU00970"/>
    </source>
</evidence>
<evidence type="ECO:0000256" key="5">
    <source>
        <dbReference type="SAM" id="MobiDB-lite"/>
    </source>
</evidence>
<reference key="1">
    <citation type="submission" date="2006-10" db="EMBL/GenBank/DDBJ databases">
        <authorList>
            <consortium name="NIH - Zebrafish Gene Collection (ZGC) project"/>
        </authorList>
    </citation>
    <scope>NUCLEOTIDE SEQUENCE [LARGE SCALE MRNA]</scope>
    <source>
        <strain>AB</strain>
    </source>
</reference>
<feature type="chain" id="PRO_0000345427" description="Histone-lysine N-methyltransferase EZH2">
    <location>
        <begin position="1"/>
        <end position="760"/>
    </location>
</feature>
<feature type="domain" description="CXC" evidence="4">
    <location>
        <begin position="517"/>
        <end position="619"/>
    </location>
</feature>
<feature type="domain" description="SET" evidence="3">
    <location>
        <begin position="626"/>
        <end position="741"/>
    </location>
</feature>
<feature type="region of interest" description="Disordered" evidence="5">
    <location>
        <begin position="208"/>
        <end position="231"/>
    </location>
</feature>
<feature type="region of interest" description="Disordered" evidence="5">
    <location>
        <begin position="356"/>
        <end position="444"/>
    </location>
</feature>
<feature type="compositionally biased region" description="Basic residues" evidence="5">
    <location>
        <begin position="361"/>
        <end position="373"/>
    </location>
</feature>
<feature type="compositionally biased region" description="Polar residues" evidence="5">
    <location>
        <begin position="375"/>
        <end position="388"/>
    </location>
</feature>
<feature type="compositionally biased region" description="Basic and acidic residues" evidence="5">
    <location>
        <begin position="389"/>
        <end position="400"/>
    </location>
</feature>
<dbReference type="EC" id="2.1.1.356" evidence="1"/>
<dbReference type="EMBL" id="BC124588">
    <property type="protein sequence ID" value="AAI24589.1"/>
    <property type="molecule type" value="mRNA"/>
</dbReference>
<dbReference type="RefSeq" id="NP_001070747.1">
    <property type="nucleotide sequence ID" value="NM_001077279.1"/>
</dbReference>
<dbReference type="SMR" id="Q08BS4"/>
<dbReference type="FunCoup" id="Q08BS4">
    <property type="interactions" value="1320"/>
</dbReference>
<dbReference type="STRING" id="7955.ENSDARP00000023693"/>
<dbReference type="PaxDb" id="7955-ENSDARP00000023693"/>
<dbReference type="GeneID" id="768133"/>
<dbReference type="KEGG" id="dre:768133"/>
<dbReference type="AGR" id="ZFIN:ZDB-GENE-041111-259"/>
<dbReference type="CTD" id="2146"/>
<dbReference type="ZFIN" id="ZDB-GENE-041111-259">
    <property type="gene designation" value="ezh2"/>
</dbReference>
<dbReference type="eggNOG" id="KOG1079">
    <property type="taxonomic scope" value="Eukaryota"/>
</dbReference>
<dbReference type="InParanoid" id="Q08BS4"/>
<dbReference type="OrthoDB" id="6141102at2759"/>
<dbReference type="PhylomeDB" id="Q08BS4"/>
<dbReference type="Reactome" id="R-DRE-212300">
    <property type="pathway name" value="PRC2 methylates histones and DNA"/>
</dbReference>
<dbReference type="Reactome" id="R-DRE-2559580">
    <property type="pathway name" value="Oxidative Stress Induced Senescence"/>
</dbReference>
<dbReference type="PRO" id="PR:Q08BS4"/>
<dbReference type="Proteomes" id="UP000000437">
    <property type="component" value="Chromosome 24"/>
</dbReference>
<dbReference type="GO" id="GO:0035098">
    <property type="term" value="C:ESC/E(Z) complex"/>
    <property type="evidence" value="ECO:0000250"/>
    <property type="project" value="UniProtKB"/>
</dbReference>
<dbReference type="GO" id="GO:0005634">
    <property type="term" value="C:nucleus"/>
    <property type="evidence" value="ECO:0000318"/>
    <property type="project" value="GO_Central"/>
</dbReference>
<dbReference type="GO" id="GO:0003682">
    <property type="term" value="F:chromatin binding"/>
    <property type="evidence" value="ECO:0000318"/>
    <property type="project" value="GO_Central"/>
</dbReference>
<dbReference type="GO" id="GO:0046976">
    <property type="term" value="F:histone H3K27 methyltransferase activity"/>
    <property type="evidence" value="ECO:0000315"/>
    <property type="project" value="ZFIN"/>
</dbReference>
<dbReference type="GO" id="GO:0140951">
    <property type="term" value="F:histone H3K27 trimethyltransferase activity"/>
    <property type="evidence" value="ECO:0007669"/>
    <property type="project" value="UniProtKB-EC"/>
</dbReference>
<dbReference type="GO" id="GO:1990841">
    <property type="term" value="F:promoter-specific chromatin binding"/>
    <property type="evidence" value="ECO:0000250"/>
    <property type="project" value="UniProtKB"/>
</dbReference>
<dbReference type="GO" id="GO:0003713">
    <property type="term" value="F:transcription coactivator activity"/>
    <property type="evidence" value="ECO:0000314"/>
    <property type="project" value="ZFIN"/>
</dbReference>
<dbReference type="GO" id="GO:0003712">
    <property type="term" value="F:transcription coregulator activity"/>
    <property type="evidence" value="ECO:0000314"/>
    <property type="project" value="ZFIN"/>
</dbReference>
<dbReference type="GO" id="GO:0007623">
    <property type="term" value="P:circadian rhythm"/>
    <property type="evidence" value="ECO:0000304"/>
    <property type="project" value="ZFIN"/>
</dbReference>
<dbReference type="GO" id="GO:0048565">
    <property type="term" value="P:digestive tract development"/>
    <property type="evidence" value="ECO:0000315"/>
    <property type="project" value="ZFIN"/>
</dbReference>
<dbReference type="GO" id="GO:0031101">
    <property type="term" value="P:fin regeneration"/>
    <property type="evidence" value="ECO:0000315"/>
    <property type="project" value="ZFIN"/>
</dbReference>
<dbReference type="GO" id="GO:0007507">
    <property type="term" value="P:heart development"/>
    <property type="evidence" value="ECO:0000315"/>
    <property type="project" value="ZFIN"/>
</dbReference>
<dbReference type="GO" id="GO:0031507">
    <property type="term" value="P:heterochromatin formation"/>
    <property type="evidence" value="ECO:0000318"/>
    <property type="project" value="GO_Central"/>
</dbReference>
<dbReference type="GO" id="GO:0032259">
    <property type="term" value="P:methylation"/>
    <property type="evidence" value="ECO:0007669"/>
    <property type="project" value="UniProtKB-KW"/>
</dbReference>
<dbReference type="GO" id="GO:0045814">
    <property type="term" value="P:negative regulation of gene expression, epigenetic"/>
    <property type="evidence" value="ECO:0000250"/>
    <property type="project" value="UniProtKB"/>
</dbReference>
<dbReference type="GO" id="GO:0042753">
    <property type="term" value="P:positive regulation of circadian rhythm"/>
    <property type="evidence" value="ECO:0000314"/>
    <property type="project" value="ZFIN"/>
</dbReference>
<dbReference type="GO" id="GO:1903708">
    <property type="term" value="P:positive regulation of hemopoiesis"/>
    <property type="evidence" value="ECO:0000315"/>
    <property type="project" value="ZFIN"/>
</dbReference>
<dbReference type="GO" id="GO:0001894">
    <property type="term" value="P:tissue homeostasis"/>
    <property type="evidence" value="ECO:0000315"/>
    <property type="project" value="ZFIN"/>
</dbReference>
<dbReference type="CDD" id="cd00167">
    <property type="entry name" value="SANT"/>
    <property type="match status" value="1"/>
</dbReference>
<dbReference type="CDD" id="cd19218">
    <property type="entry name" value="SET_EZH2"/>
    <property type="match status" value="1"/>
</dbReference>
<dbReference type="FunFam" id="2.170.270.10:FF:000001">
    <property type="entry name" value="Putative histone-lysine N-methyltransferase EZH2"/>
    <property type="match status" value="1"/>
</dbReference>
<dbReference type="Gene3D" id="2.170.270.10">
    <property type="entry name" value="SET domain"/>
    <property type="match status" value="1"/>
</dbReference>
<dbReference type="InterPro" id="IPR026489">
    <property type="entry name" value="CXC_dom"/>
</dbReference>
<dbReference type="InterPro" id="IPR045318">
    <property type="entry name" value="EZH1/2-like"/>
</dbReference>
<dbReference type="InterPro" id="IPR048358">
    <property type="entry name" value="EZH1/2_MCSS"/>
</dbReference>
<dbReference type="InterPro" id="IPR021654">
    <property type="entry name" value="EZH1/EZH2"/>
</dbReference>
<dbReference type="InterPro" id="IPR044439">
    <property type="entry name" value="EZH2_SET"/>
</dbReference>
<dbReference type="InterPro" id="IPR041343">
    <property type="entry name" value="PRC2_HTH_1"/>
</dbReference>
<dbReference type="InterPro" id="IPR041355">
    <property type="entry name" value="Pre-SET_CXC"/>
</dbReference>
<dbReference type="InterPro" id="IPR001005">
    <property type="entry name" value="SANT/Myb"/>
</dbReference>
<dbReference type="InterPro" id="IPR001214">
    <property type="entry name" value="SET_dom"/>
</dbReference>
<dbReference type="InterPro" id="IPR046341">
    <property type="entry name" value="SET_dom_sf"/>
</dbReference>
<dbReference type="InterPro" id="IPR033467">
    <property type="entry name" value="Tesmin/TSO1-like_CXC"/>
</dbReference>
<dbReference type="PANTHER" id="PTHR45747">
    <property type="entry name" value="HISTONE-LYSINE N-METHYLTRANSFERASE E(Z)"/>
    <property type="match status" value="1"/>
</dbReference>
<dbReference type="PANTHER" id="PTHR45747:SF18">
    <property type="entry name" value="HISTONE-LYSINE N-METHYLTRANSFERASE EZH2"/>
    <property type="match status" value="1"/>
</dbReference>
<dbReference type="Pfam" id="PF21358">
    <property type="entry name" value="Ezh2_MCSS"/>
    <property type="match status" value="1"/>
</dbReference>
<dbReference type="Pfam" id="PF11616">
    <property type="entry name" value="EZH2_WD-Binding"/>
    <property type="match status" value="1"/>
</dbReference>
<dbReference type="Pfam" id="PF18118">
    <property type="entry name" value="PRC2_HTH_1"/>
    <property type="match status" value="1"/>
</dbReference>
<dbReference type="Pfam" id="PF18264">
    <property type="entry name" value="preSET_CXC"/>
    <property type="match status" value="1"/>
</dbReference>
<dbReference type="Pfam" id="PF00856">
    <property type="entry name" value="SET"/>
    <property type="match status" value="1"/>
</dbReference>
<dbReference type="SMART" id="SM01114">
    <property type="entry name" value="CXC"/>
    <property type="match status" value="1"/>
</dbReference>
<dbReference type="SMART" id="SM00717">
    <property type="entry name" value="SANT"/>
    <property type="match status" value="2"/>
</dbReference>
<dbReference type="SMART" id="SM00317">
    <property type="entry name" value="SET"/>
    <property type="match status" value="1"/>
</dbReference>
<dbReference type="SUPFAM" id="SSF82199">
    <property type="entry name" value="SET domain"/>
    <property type="match status" value="1"/>
</dbReference>
<dbReference type="PROSITE" id="PS51633">
    <property type="entry name" value="CXC"/>
    <property type="match status" value="1"/>
</dbReference>
<dbReference type="PROSITE" id="PS50280">
    <property type="entry name" value="SET"/>
    <property type="match status" value="1"/>
</dbReference>
<accession>Q08BS4</accession>
<keyword id="KW-0090">Biological rhythms</keyword>
<keyword id="KW-0156">Chromatin regulator</keyword>
<keyword id="KW-0489">Methyltransferase</keyword>
<keyword id="KW-0539">Nucleus</keyword>
<keyword id="KW-1185">Reference proteome</keyword>
<keyword id="KW-0678">Repressor</keyword>
<keyword id="KW-0949">S-adenosyl-L-methionine</keyword>
<keyword id="KW-0804">Transcription</keyword>
<keyword id="KW-0805">Transcription regulation</keyword>
<keyword id="KW-0808">Transferase</keyword>
<sequence>MGLTGRKSEKGPVCWRRRVKSEYMRLRQLKRFRRADEVKSMFSSNRQKILERTDILNQEWKLRRIQPVHIMTPVSSLRGTRECTVDSGFSEFSRQVIPLKTLNAVASVPVMYSWSPLQQNFMVEDETVLHNIPYMGDEILDQDGTFIEELIKNYDGKVHGDRECGFINDEIFVELVNALNQYSDNEEDDEEDDHHDYKFEKMDLCDGKDDAEDHKEQLSSESHNNDGSKKFPSDKIFEAISSMFPDKGSTEELKEKYKELTEQQLPGALPPECTPNIDGPNAKSVQREQSLHSFHTLFCRRCFKYDCFLHPFQATPNTYKRKNMENLVDSKPCGIYCYMYMVQDGMVREYPAGVVPERAKTPSKRSTGRRRGRLPNSNSRPSTPTVNSETKDTDSDREGGADGNDSNDKDDDDKKDETTSSSEANSRCQTPVKLKLSSEPPENVDWSGAEASLFRVLIGTYYDNFCAIARLIGTKTCRQVYEFRVKESSIIARAPAVDENTPQRKKKRKHRLWATHCRKIQLKKDGSSNHVYNYQPCDHPRQPCDSSCPCVTAQNFCEKFCQCSSECQNRFPGCRCKAQCNTKQCPCYLAVRECDPDLCLTCGAAEHWDSKNVSCKNCSIQRGAKKHLLLAPSDVAGWGIFIKEPVQKNEFISEYCGEIISQDEADRRGKVYDKYMCSFLFNLNNDFVVDATRKGNKIRFANHSVNPNCYAKVMMVNGDHRIGIFAKRAIQTGEELFFDYRYSQADALKYVGIEREMEIP</sequence>
<protein>
    <recommendedName>
        <fullName>Histone-lysine N-methyltransferase EZH2</fullName>
        <ecNumber evidence="1">2.1.1.356</ecNumber>
    </recommendedName>
    <alternativeName>
        <fullName>Enhancer of zeste homolog 2</fullName>
    </alternativeName>
</protein>
<comment type="function">
    <text evidence="2">Polycomb group (PcG) protein. Catalytic subunit of the prc2/eed-ezh2 complex, which methylates 'Lys-9' and 'Lys-27' of histone H3, leading to transcriptional repression of the affected target gene. May regulate the circadian clock via histone methylation at the promoter of the circadian genes.</text>
</comment>
<comment type="catalytic activity">
    <reaction evidence="1">
        <text>L-lysyl(27)-[histone H3] + 3 S-adenosyl-L-methionine = N(6),N(6),N(6)-trimethyl-L-lysyl(27)-[histone H3] + 3 S-adenosyl-L-homocysteine + 3 H(+)</text>
        <dbReference type="Rhea" id="RHEA:60292"/>
        <dbReference type="Rhea" id="RHEA-COMP:15535"/>
        <dbReference type="Rhea" id="RHEA-COMP:15548"/>
        <dbReference type="ChEBI" id="CHEBI:15378"/>
        <dbReference type="ChEBI" id="CHEBI:29969"/>
        <dbReference type="ChEBI" id="CHEBI:57856"/>
        <dbReference type="ChEBI" id="CHEBI:59789"/>
        <dbReference type="ChEBI" id="CHEBI:61961"/>
        <dbReference type="EC" id="2.1.1.356"/>
    </reaction>
</comment>
<comment type="subunit">
    <text evidence="1">Component of the prc2/eed-ezh2 complex.</text>
</comment>
<comment type="subcellular location">
    <subcellularLocation>
        <location evidence="1">Nucleus</location>
    </subcellularLocation>
</comment>
<comment type="similarity">
    <text evidence="3">Belongs to the class V-like SAM-binding methyltransferase superfamily. Histone-lysine methyltransferase family. EZ subfamily.</text>
</comment>
<gene>
    <name type="primary">ezh2</name>
    <name type="synonym">zgc:152758</name>
</gene>
<name>EZH2_DANRE</name>
<proteinExistence type="evidence at transcript level"/>
<organism>
    <name type="scientific">Danio rerio</name>
    <name type="common">Zebrafish</name>
    <name type="synonym">Brachydanio rerio</name>
    <dbReference type="NCBI Taxonomy" id="7955"/>
    <lineage>
        <taxon>Eukaryota</taxon>
        <taxon>Metazoa</taxon>
        <taxon>Chordata</taxon>
        <taxon>Craniata</taxon>
        <taxon>Vertebrata</taxon>
        <taxon>Euteleostomi</taxon>
        <taxon>Actinopterygii</taxon>
        <taxon>Neopterygii</taxon>
        <taxon>Teleostei</taxon>
        <taxon>Ostariophysi</taxon>
        <taxon>Cypriniformes</taxon>
        <taxon>Danionidae</taxon>
        <taxon>Danioninae</taxon>
        <taxon>Danio</taxon>
    </lineage>
</organism>